<protein>
    <recommendedName>
        <fullName>Macro domain-containing protein in sno 5'region</fullName>
    </recommendedName>
    <alternativeName>
        <fullName>ORF7</fullName>
    </alternativeName>
</protein>
<dbReference type="EMBL" id="AF323753">
    <property type="protein sequence ID" value="AAG42849.1"/>
    <property type="molecule type" value="Genomic_DNA"/>
</dbReference>
<dbReference type="RefSeq" id="WP_344346046.1">
    <property type="nucleotide sequence ID" value="NZ_BAAASM010000002.1"/>
</dbReference>
<dbReference type="SMR" id="Q9EYI6"/>
<dbReference type="CDD" id="cd02908">
    <property type="entry name" value="Macro_OAADPr_deacetylase"/>
    <property type="match status" value="1"/>
</dbReference>
<dbReference type="Gene3D" id="3.40.220.10">
    <property type="entry name" value="Leucine Aminopeptidase, subunit E, domain 1"/>
    <property type="match status" value="1"/>
</dbReference>
<dbReference type="InterPro" id="IPR002589">
    <property type="entry name" value="Macro_dom"/>
</dbReference>
<dbReference type="InterPro" id="IPR043472">
    <property type="entry name" value="Macro_dom-like"/>
</dbReference>
<dbReference type="NCBIfam" id="NF001664">
    <property type="entry name" value="PRK00431.1-6"/>
    <property type="match status" value="1"/>
</dbReference>
<dbReference type="PANTHER" id="PTHR11106">
    <property type="entry name" value="GANGLIOSIDE INDUCED DIFFERENTIATION ASSOCIATED PROTEIN 2-RELATED"/>
    <property type="match status" value="1"/>
</dbReference>
<dbReference type="PANTHER" id="PTHR11106:SF27">
    <property type="entry name" value="MACRO DOMAIN-CONTAINING PROTEIN"/>
    <property type="match status" value="1"/>
</dbReference>
<dbReference type="Pfam" id="PF01661">
    <property type="entry name" value="Macro"/>
    <property type="match status" value="1"/>
</dbReference>
<dbReference type="SMART" id="SM00506">
    <property type="entry name" value="A1pp"/>
    <property type="match status" value="1"/>
</dbReference>
<dbReference type="SUPFAM" id="SSF52949">
    <property type="entry name" value="Macro domain-like"/>
    <property type="match status" value="1"/>
</dbReference>
<dbReference type="PROSITE" id="PS51154">
    <property type="entry name" value="MACRO"/>
    <property type="match status" value="1"/>
</dbReference>
<accession>Q9EYI6</accession>
<evidence type="ECO:0000255" key="1">
    <source>
        <dbReference type="PROSITE-ProRule" id="PRU00490"/>
    </source>
</evidence>
<evidence type="ECO:0000305" key="2"/>
<reference key="1">
    <citation type="journal article" date="2001" name="Mol. Genet. Genomics">
        <title>The entire nogalamycin biosynthetic gene cluster of Streptomyces nogalater: characterization of a 20-kb DNA region and generation of hybrid structures.</title>
        <authorList>
            <person name="Torkkell S."/>
            <person name="Kunnari T."/>
            <person name="Palmu K."/>
            <person name="Maentsaelae P."/>
            <person name="Hakala J."/>
            <person name="Ylihonko K."/>
        </authorList>
    </citation>
    <scope>NUCLEOTIDE SEQUENCE [GENOMIC DNA]</scope>
    <source>
        <strain>ATCC 27451 / DSM 40546 / JCM 4553 / NBRC 13445 / NCIMB 9489 / VKM Ac-1290</strain>
    </source>
</reference>
<name>Y189_STRNO</name>
<sequence length="181" mass="19048">MTTITLVQGDITRQHADALVNAANSSLLGGGGVDGAIHRRGGPAILAECRALRASRYGEGLPTGRAVATTAGDLDARWVIHTVGPVWSSTEDRSDLLASCYRESLRLAGELGARTVAFPALSTGVYRWPMGDAARIAVETVRTTPTAVEEVRFVLFDTHAYDTFARELGDAGHAGHAGHPG</sequence>
<comment type="similarity">
    <text evidence="2">Belongs to the MacroD-type family.</text>
</comment>
<feature type="chain" id="PRO_0000089216" description="Macro domain-containing protein in sno 5'region">
    <location>
        <begin position="1"/>
        <end position="181"/>
    </location>
</feature>
<feature type="domain" description="Macro" evidence="1">
    <location>
        <begin position="1"/>
        <end position="172"/>
    </location>
</feature>
<proteinExistence type="inferred from homology"/>
<organism>
    <name type="scientific">Streptomyces nogalater</name>
    <dbReference type="NCBI Taxonomy" id="38314"/>
    <lineage>
        <taxon>Bacteria</taxon>
        <taxon>Bacillati</taxon>
        <taxon>Actinomycetota</taxon>
        <taxon>Actinomycetes</taxon>
        <taxon>Kitasatosporales</taxon>
        <taxon>Streptomycetaceae</taxon>
        <taxon>Streptomyces</taxon>
    </lineage>
</organism>